<sequence length="154" mass="17117">MIIKNLQEFYRLLIPNAPLIAIDYGSKKLGIALSNQERSIAMPLNTITEINKKIVITSLLNIIEKYKVCGVIIGLPIDMSGAVTEQTNIVMKFAEELAKSINLPIYLQDERLTTKAANNLLKSFGVKRKDRNNNDDAVAASMILETVLDSIKNI</sequence>
<protein>
    <recommendedName>
        <fullName evidence="1">Putative pre-16S rRNA nuclease</fullName>
        <ecNumber evidence="1">3.1.-.-</ecNumber>
    </recommendedName>
</protein>
<gene>
    <name type="ordered locus">RPR_07035</name>
</gene>
<proteinExistence type="inferred from homology"/>
<name>YQGF_RICPU</name>
<evidence type="ECO:0000255" key="1">
    <source>
        <dbReference type="HAMAP-Rule" id="MF_00651"/>
    </source>
</evidence>
<dbReference type="EC" id="3.1.-.-" evidence="1"/>
<dbReference type="EMBL" id="CP001227">
    <property type="protein sequence ID" value="ACR47866.1"/>
    <property type="molecule type" value="Genomic_DNA"/>
</dbReference>
<dbReference type="SMR" id="C4K2S0"/>
<dbReference type="KEGG" id="rpk:RPR_07035"/>
<dbReference type="HOGENOM" id="CLU_098240_2_2_5"/>
<dbReference type="Proteomes" id="UP000005015">
    <property type="component" value="Chromosome"/>
</dbReference>
<dbReference type="GO" id="GO:0005829">
    <property type="term" value="C:cytosol"/>
    <property type="evidence" value="ECO:0007669"/>
    <property type="project" value="TreeGrafter"/>
</dbReference>
<dbReference type="GO" id="GO:0004518">
    <property type="term" value="F:nuclease activity"/>
    <property type="evidence" value="ECO:0007669"/>
    <property type="project" value="UniProtKB-KW"/>
</dbReference>
<dbReference type="GO" id="GO:0000967">
    <property type="term" value="P:rRNA 5'-end processing"/>
    <property type="evidence" value="ECO:0007669"/>
    <property type="project" value="UniProtKB-UniRule"/>
</dbReference>
<dbReference type="CDD" id="cd16964">
    <property type="entry name" value="YqgF"/>
    <property type="match status" value="1"/>
</dbReference>
<dbReference type="Gene3D" id="3.30.420.140">
    <property type="entry name" value="YqgF/RNase H-like domain"/>
    <property type="match status" value="1"/>
</dbReference>
<dbReference type="HAMAP" id="MF_00651">
    <property type="entry name" value="Nuclease_YqgF"/>
    <property type="match status" value="1"/>
</dbReference>
<dbReference type="InterPro" id="IPR012337">
    <property type="entry name" value="RNaseH-like_sf"/>
</dbReference>
<dbReference type="InterPro" id="IPR005227">
    <property type="entry name" value="YqgF"/>
</dbReference>
<dbReference type="InterPro" id="IPR006641">
    <property type="entry name" value="YqgF/RNaseH-like_dom"/>
</dbReference>
<dbReference type="InterPro" id="IPR037027">
    <property type="entry name" value="YqgF/RNaseH-like_dom_sf"/>
</dbReference>
<dbReference type="NCBIfam" id="TIGR00250">
    <property type="entry name" value="RNAse_H_YqgF"/>
    <property type="match status" value="1"/>
</dbReference>
<dbReference type="PANTHER" id="PTHR33317">
    <property type="entry name" value="POLYNUCLEOTIDYL TRANSFERASE, RIBONUCLEASE H-LIKE SUPERFAMILY PROTEIN"/>
    <property type="match status" value="1"/>
</dbReference>
<dbReference type="PANTHER" id="PTHR33317:SF4">
    <property type="entry name" value="POLYNUCLEOTIDYL TRANSFERASE, RIBONUCLEASE H-LIKE SUPERFAMILY PROTEIN"/>
    <property type="match status" value="1"/>
</dbReference>
<dbReference type="Pfam" id="PF03652">
    <property type="entry name" value="RuvX"/>
    <property type="match status" value="1"/>
</dbReference>
<dbReference type="SMART" id="SM00732">
    <property type="entry name" value="YqgFc"/>
    <property type="match status" value="1"/>
</dbReference>
<dbReference type="SUPFAM" id="SSF53098">
    <property type="entry name" value="Ribonuclease H-like"/>
    <property type="match status" value="1"/>
</dbReference>
<comment type="function">
    <text evidence="1">Could be a nuclease involved in processing of the 5'-end of pre-16S rRNA.</text>
</comment>
<comment type="subcellular location">
    <subcellularLocation>
        <location evidence="1">Cytoplasm</location>
    </subcellularLocation>
</comment>
<comment type="similarity">
    <text evidence="1">Belongs to the YqgF nuclease family.</text>
</comment>
<accession>C4K2S0</accession>
<feature type="chain" id="PRO_1000212420" description="Putative pre-16S rRNA nuclease">
    <location>
        <begin position="1"/>
        <end position="154"/>
    </location>
</feature>
<organism>
    <name type="scientific">Rickettsia peacockii (strain Rustic)</name>
    <dbReference type="NCBI Taxonomy" id="562019"/>
    <lineage>
        <taxon>Bacteria</taxon>
        <taxon>Pseudomonadati</taxon>
        <taxon>Pseudomonadota</taxon>
        <taxon>Alphaproteobacteria</taxon>
        <taxon>Rickettsiales</taxon>
        <taxon>Rickettsiaceae</taxon>
        <taxon>Rickettsieae</taxon>
        <taxon>Rickettsia</taxon>
        <taxon>spotted fever group</taxon>
    </lineage>
</organism>
<keyword id="KW-0963">Cytoplasm</keyword>
<keyword id="KW-0378">Hydrolase</keyword>
<keyword id="KW-0540">Nuclease</keyword>
<keyword id="KW-0690">Ribosome biogenesis</keyword>
<reference key="1">
    <citation type="journal article" date="2009" name="PLoS ONE">
        <title>Genome sequence of the endosymbiont Rickettsia peacockii and comparison with virulent Rickettsia rickettsii: identification of virulence factors.</title>
        <authorList>
            <person name="Felsheim R.F."/>
            <person name="Kurtti T.J."/>
            <person name="Munderloh U.G."/>
        </authorList>
    </citation>
    <scope>NUCLEOTIDE SEQUENCE [LARGE SCALE GENOMIC DNA]</scope>
    <source>
        <strain>Rustic</strain>
    </source>
</reference>